<protein>
    <recommendedName>
        <fullName>Sperm acrosomal protein FSA-ACR.1</fullName>
    </recommendedName>
</protein>
<name>ASPX_VULVU</name>
<accession>P53353</accession>
<evidence type="ECO:0000255" key="1"/>
<evidence type="ECO:0000256" key="2">
    <source>
        <dbReference type="SAM" id="MobiDB-lite"/>
    </source>
</evidence>
<evidence type="ECO:0000303" key="3">
    <source>
    </source>
</evidence>
<evidence type="ECO:0000305" key="4"/>
<keyword id="KW-0025">Alternative splicing</keyword>
<keyword id="KW-0968">Cytoplasmic vesicle</keyword>
<keyword id="KW-0325">Glycoprotein</keyword>
<keyword id="KW-1185">Reference proteome</keyword>
<keyword id="KW-0677">Repeat</keyword>
<keyword id="KW-0732">Signal</keyword>
<reference key="1">
    <citation type="journal article" date="1995" name="Mol. Reprod. Dev.">
        <title>Cloning and partial characterization of the cDNA encoding the fox sperm protein FSA-Acr.1 with similarities to the SP-10 antigen.</title>
        <authorList>
            <person name="Beaton S."/>
            <person name="ten Have J."/>
            <person name="Cleary A."/>
            <person name="Bradley M.P."/>
        </authorList>
    </citation>
    <scope>NUCLEOTIDE SEQUENCE [MRNA] (ISOFORMS 1; 2 AND 3)</scope>
    <source>
        <tissue>Testis</tissue>
    </source>
</reference>
<sequence length="349" mass="36486">MKEVYLVGYARGASGQSDEPPGSMDHQASVQRLSGEYFSLGNPSDGEALYETAAGENTLSEHTSGEHTSVEHASAEHSSTEHTSGEHASGEHTSGERATGEHTSSEHATSEHTSGEQPSGEQPSGEKSSGEQPSGEKSSGEQPSGEKSLGEQPSGEQSSGEKSSAEQTSGEQAVAEKPSGEHAVAEKPSGEQAVAERPSGEQAVAEKPLGEQAVAERPSGEQASIEKASSEQASAEQASAEQASSEQASGEKPLGEQPSGIPPSSTFSGPILNCHTCSYMNDQGKCLRGEGVCSTQNSQQCMLKKIFEGGKLQFMVQGCENMCPSMNLFSHGTRMQIICCRNQSFCNKI</sequence>
<feature type="signal peptide" evidence="1">
    <location>
        <begin position="1" status="less than"/>
        <end position="8"/>
    </location>
</feature>
<feature type="chain" id="PRO_0000020763" description="Sperm acrosomal protein FSA-ACR.1">
    <location>
        <begin position="9"/>
        <end position="349"/>
    </location>
</feature>
<feature type="region of interest" description="Disordered" evidence="2">
    <location>
        <begin position="1"/>
        <end position="265"/>
    </location>
</feature>
<feature type="compositionally biased region" description="Basic and acidic residues" evidence="2">
    <location>
        <begin position="63"/>
        <end position="114"/>
    </location>
</feature>
<feature type="compositionally biased region" description="Polar residues" evidence="2">
    <location>
        <begin position="117"/>
        <end position="142"/>
    </location>
</feature>
<feature type="compositionally biased region" description="Polar residues" evidence="2">
    <location>
        <begin position="154"/>
        <end position="171"/>
    </location>
</feature>
<feature type="compositionally biased region" description="Basic and acidic residues" evidence="2">
    <location>
        <begin position="178"/>
        <end position="189"/>
    </location>
</feature>
<feature type="compositionally biased region" description="Low complexity" evidence="2">
    <location>
        <begin position="221"/>
        <end position="248"/>
    </location>
</feature>
<feature type="glycosylation site" description="N-linked (GlcNAc...) asparagine" evidence="1">
    <location>
        <position position="342"/>
    </location>
</feature>
<feature type="splice variant" id="VSP_004130" description="In isoform 2." evidence="3">
    <original>MKEVYLV</original>
    <variation>MSLYLI</variation>
    <location>
        <begin position="1" status="less than"/>
        <end position="7"/>
    </location>
</feature>
<feature type="splice variant" id="VSP_004131" description="In isoform 2." evidence="3">
    <original>G</original>
    <variation>GEQPSGEKSSG</variation>
    <location>
        <position position="140"/>
    </location>
</feature>
<feature type="splice variant" id="VSP_004132" description="In isoform 3." evidence="3">
    <original>G</original>
    <variation>GEQPSGEKSLGEQPSGEKSSG</variation>
    <location>
        <position position="140"/>
    </location>
</feature>
<feature type="non-terminal residue">
    <location>
        <position position="1"/>
    </location>
</feature>
<comment type="subcellular location">
    <subcellularLocation>
        <location>Cytoplasmic vesicle</location>
        <location>Secretory vesicle</location>
        <location>Acrosome</location>
    </subcellularLocation>
    <text>Intracellular acrosomal compartment of sperm.</text>
</comment>
<comment type="alternative products">
    <event type="alternative splicing"/>
    <isoform>
        <id>P53353-1</id>
        <name>1</name>
        <name>FSA-Acr.1</name>
        <sequence type="displayed"/>
    </isoform>
    <isoform>
        <id>P53353-2</id>
        <name>2</name>
        <name>FSA-Acr.2</name>
        <sequence type="described" ref="VSP_004130 VSP_004131"/>
    </isoform>
    <isoform>
        <id>P53353-3</id>
        <name>3</name>
        <name>FSA-Acr.3</name>
        <sequence type="described" ref="VSP_004132"/>
    </isoform>
    <text>Experimental confirmation may be lacking for some isoforms.</text>
</comment>
<comment type="tissue specificity">
    <text>Testis.</text>
</comment>
<comment type="similarity">
    <text evidence="4">To acrosomal proteins SP-10.</text>
</comment>
<proteinExistence type="evidence at transcript level"/>
<organism>
    <name type="scientific">Vulpes vulpes</name>
    <name type="common">Red fox</name>
    <dbReference type="NCBI Taxonomy" id="9627"/>
    <lineage>
        <taxon>Eukaryota</taxon>
        <taxon>Metazoa</taxon>
        <taxon>Chordata</taxon>
        <taxon>Craniata</taxon>
        <taxon>Vertebrata</taxon>
        <taxon>Euteleostomi</taxon>
        <taxon>Mammalia</taxon>
        <taxon>Eutheria</taxon>
        <taxon>Laurasiatheria</taxon>
        <taxon>Carnivora</taxon>
        <taxon>Caniformia</taxon>
        <taxon>Canidae</taxon>
        <taxon>Vulpes</taxon>
    </lineage>
</organism>
<dbReference type="EMBL" id="U06077">
    <property type="protein sequence ID" value="AAC48463.1"/>
    <property type="molecule type" value="mRNA"/>
</dbReference>
<dbReference type="STRING" id="9627.ENSVVUP00000027517"/>
<dbReference type="Proteomes" id="UP000286640">
    <property type="component" value="Unplaced"/>
</dbReference>
<dbReference type="GO" id="GO:0001669">
    <property type="term" value="C:acrosomal vesicle"/>
    <property type="evidence" value="ECO:0007669"/>
    <property type="project" value="UniProtKB-SubCell"/>
</dbReference>
<dbReference type="CDD" id="cd23628">
    <property type="entry name" value="TFP_LU_ECD_SP10_like"/>
    <property type="match status" value="1"/>
</dbReference>
<dbReference type="InterPro" id="IPR052671">
    <property type="entry name" value="Acrosomal_SP-10-like"/>
</dbReference>
<dbReference type="InterPro" id="IPR016054">
    <property type="entry name" value="LY6_UPA_recep-like"/>
</dbReference>
<dbReference type="PANTHER" id="PTHR17571:SF34">
    <property type="entry name" value="ACROSOMAL PROTEIN SP-10"/>
    <property type="match status" value="1"/>
</dbReference>
<dbReference type="PANTHER" id="PTHR17571">
    <property type="entry name" value="URINARY PROTEIN RUP /ACROSOMAL PROTEIN SP-10"/>
    <property type="match status" value="1"/>
</dbReference>
<dbReference type="Pfam" id="PF00021">
    <property type="entry name" value="UPAR_LY6"/>
    <property type="match status" value="1"/>
</dbReference>